<accession>Q5D892</accession>
<accession>A0A1I9LN52</accession>
<accession>Q9LVW8</accession>
<sequence>MDTHTLKSVSDLPGNFRSAFSFRYFNSLQSECFPLCFHSDINMIISAPTGSGKTVLFELCILRLFSKSISKEGSFLHAKGALKTVYISPSKALVQEKLRDWNQKFNSWGISCLELTGDNETYSTKNIQDADIILTTPEKFDAVSRYRVTSGGLGFFSDIALVLIDEVHLLNDPRGAALEAIVSRLKILSSNHELRSSTLASVRLLAVSATIPNIEDLAEWLKVPTAGIKRFGEEMRPVKLTTKVFGYAAAKNDFLFEKRLQNYIYDILMQYSKGKSALVFCSTRKGAQEAAQKLAQTAMTYGYSNPFIKSREQLERLREASPMCSDKQMQSYILQGVGYHNGGLCQKDRSLVEGLFLNGDIQVICTTNTLAHGINLPAHTVVIKSTQHFNKEKGHYMEYDRSTLLQMSGRAGRPPFDDTGMVIIMTRRETVHLYENLLNGCEVVESQLLPCLIEHLTAEIVQLTISDITRAIEWMKCSYLYVRMKKNPENYAIKKGIPKDRVEKHLQELCLQKINELSQYQMIWTDTDGFVLKPEEPGRLMTKYYLKFETMKYIINTPTSYSLDEALHIVCHAEEISWIQLRRNEKKTLNDVNADKEGRLRFHINDNKGKRKKRIQTREEKLFVLANDWLTGDPSVHDLSMTQDANSICSNGSRIARCMKEYFIYKKNYKGTLSSTLLAKSLYQKLWDDSPYLLKQLPGIGMVTAKALHSMGVRSFEALAEADPRRIEIVTGRKYPFGNTIKESLSSLPPKVEIKVEEVDCQKQGISKLAVTLSRVSQPLQSTKRHYADLIVGSEEENLIHFHEKIRMEDFSSPYSVTVLLERPHQQTKVTVKADLIFEEYIGIDLHETLLLKKANNNKVNYKSENRMPQYYPPMASACIADDDNPVTSGPSNRKDKKDDMPSFKLIDDDSEEEKEPYVTMEEDDCVIINEHTVFDHIREKAKCFPSLNPLNPTSSPASGKSILKRKSLVENNSPELDPLFQYDSVFDLPTNTKDIKQSAQQITSPGYASFAEKTETERPFSDETIFNYIRKRSKNSPALATSKIENPITISSQEGRNAEISPYRTYGLLVSPATKIPRITSDAPSEILSFDISMVKRSDTSLEQTKGFCSTLAGKSNVSDSFLGFKSIFSFL</sequence>
<keyword id="KW-0067">ATP-binding</keyword>
<keyword id="KW-0238">DNA-binding</keyword>
<keyword id="KW-0347">Helicase</keyword>
<keyword id="KW-0378">Hydrolase</keyword>
<keyword id="KW-0413">Isomerase</keyword>
<keyword id="KW-0469">Meiosis</keyword>
<keyword id="KW-0547">Nucleotide-binding</keyword>
<keyword id="KW-0539">Nucleus</keyword>
<keyword id="KW-1185">Reference proteome</keyword>
<keyword id="KW-0694">RNA-binding</keyword>
<keyword id="KW-0699">rRNA-binding</keyword>
<proteinExistence type="evidence at transcript level"/>
<reference key="1">
    <citation type="journal article" date="2005" name="Curr. Biol.">
        <title>Two meiotic crossover classes cohabit in Arabidopsis: one is dependent on MER3, whereas the other one is not.</title>
        <authorList>
            <person name="Mercier R."/>
            <person name="Jolivet S."/>
            <person name="Vezon D."/>
            <person name="Huppe E."/>
            <person name="Chelysheva L."/>
            <person name="Giovanni M."/>
            <person name="Nogue F."/>
            <person name="Doutriaux M.-P."/>
            <person name="Horlow C."/>
            <person name="Grelon M."/>
            <person name="Mezard C."/>
        </authorList>
    </citation>
    <scope>NUCLEOTIDE SEQUENCE [MRNA]</scope>
    <scope>FUNCTION</scope>
    <scope>TISSUE SPECIFICITY</scope>
    <scope>DISRUPTION PHENOTYPE</scope>
</reference>
<reference key="2">
    <citation type="journal article" date="2005" name="Plant J.">
        <title>The Arabidopsis ROCK-N-ROLLERS gene encodes a homolog of the yeast ATP-dependent DNA helicase MER3 and is required for normal meiotic crossover formation.</title>
        <authorList>
            <person name="Chen C."/>
            <person name="Zhang W."/>
            <person name="Timofejeva L."/>
            <person name="Gerardin Y."/>
            <person name="Ma H."/>
        </authorList>
    </citation>
    <scope>NUCLEOTIDE SEQUENCE [MRNA]</scope>
    <scope>FUNCTION</scope>
    <scope>TISSUE SPECIFICITY</scope>
    <scope>DISRUPTION PHENOTYPE</scope>
</reference>
<reference key="3">
    <citation type="journal article" date="2000" name="DNA Res.">
        <title>Structural analysis of Arabidopsis thaliana chromosome 3. I. Sequence features of the regions of 4,504,864 bp covered by sixty P1 and TAC clones.</title>
        <authorList>
            <person name="Sato S."/>
            <person name="Nakamura Y."/>
            <person name="Kaneko T."/>
            <person name="Katoh T."/>
            <person name="Asamizu E."/>
            <person name="Tabata S."/>
        </authorList>
    </citation>
    <scope>NUCLEOTIDE SEQUENCE [LARGE SCALE GENOMIC DNA]</scope>
    <source>
        <strain>cv. Columbia</strain>
    </source>
</reference>
<reference key="4">
    <citation type="journal article" date="2017" name="Plant J.">
        <title>Araport11: a complete reannotation of the Arabidopsis thaliana reference genome.</title>
        <authorList>
            <person name="Cheng C.Y."/>
            <person name="Krishnakumar V."/>
            <person name="Chan A.P."/>
            <person name="Thibaud-Nissen F."/>
            <person name="Schobel S."/>
            <person name="Town C.D."/>
        </authorList>
    </citation>
    <scope>GENOME REANNOTATION</scope>
    <source>
        <strain>cv. Columbia</strain>
    </source>
</reference>
<reference key="5">
    <citation type="journal article" date="2013" name="PLoS ONE">
        <title>Genome-wide comparative in silico analysis of the RNA helicase gene family in Zea mays and Glycine max: a comparison with Arabidopsis and Oryza sativa.</title>
        <authorList>
            <person name="Xu R."/>
            <person name="Zhang S."/>
            <person name="Huang J."/>
            <person name="Zheng C."/>
        </authorList>
    </citation>
    <scope>GENE FAMILY</scope>
</reference>
<dbReference type="EC" id="5.6.2.4" evidence="2"/>
<dbReference type="EMBL" id="AY822649">
    <property type="protein sequence ID" value="AAX14498.1"/>
    <property type="molecule type" value="mRNA"/>
</dbReference>
<dbReference type="EMBL" id="AY960701">
    <property type="protein sequence ID" value="AAX58606.1"/>
    <property type="molecule type" value="mRNA"/>
</dbReference>
<dbReference type="EMBL" id="AB018114">
    <property type="protein sequence ID" value="BAB02697.1"/>
    <property type="status" value="ALT_SEQ"/>
    <property type="molecule type" value="Genomic_DNA"/>
</dbReference>
<dbReference type="EMBL" id="CP002686">
    <property type="protein sequence ID" value="AEE77357.1"/>
    <property type="molecule type" value="Genomic_DNA"/>
</dbReference>
<dbReference type="EMBL" id="CP002686">
    <property type="protein sequence ID" value="ANM64007.1"/>
    <property type="molecule type" value="Genomic_DNA"/>
</dbReference>
<dbReference type="EMBL" id="CP002686">
    <property type="protein sequence ID" value="ANM64010.1"/>
    <property type="molecule type" value="Genomic_DNA"/>
</dbReference>
<dbReference type="RefSeq" id="NP_001326060.1">
    <property type="nucleotide sequence ID" value="NM_001338909.1"/>
</dbReference>
<dbReference type="RefSeq" id="NP_001326063.1">
    <property type="nucleotide sequence ID" value="NM_001338910.1"/>
</dbReference>
<dbReference type="RefSeq" id="NP_189410.2">
    <property type="nucleotide sequence ID" value="NM_113689.2"/>
</dbReference>
<dbReference type="SMR" id="Q5D892"/>
<dbReference type="FunCoup" id="Q5D892">
    <property type="interactions" value="182"/>
</dbReference>
<dbReference type="STRING" id="3702.Q5D892"/>
<dbReference type="GlyGen" id="Q5D892">
    <property type="glycosylation" value="1 site"/>
</dbReference>
<dbReference type="iPTMnet" id="Q5D892"/>
<dbReference type="PaxDb" id="3702-AT3G27730.1"/>
<dbReference type="EnsemblPlants" id="AT3G27730.1">
    <property type="protein sequence ID" value="AT3G27730.1"/>
    <property type="gene ID" value="AT3G27730"/>
</dbReference>
<dbReference type="EnsemblPlants" id="AT3G27730.6">
    <property type="protein sequence ID" value="AT3G27730.6"/>
    <property type="gene ID" value="AT3G27730"/>
</dbReference>
<dbReference type="EnsemblPlants" id="AT3G27730.7">
    <property type="protein sequence ID" value="AT3G27730.7"/>
    <property type="gene ID" value="AT3G27730"/>
</dbReference>
<dbReference type="GeneID" id="822395"/>
<dbReference type="Gramene" id="AT3G27730.1">
    <property type="protein sequence ID" value="AT3G27730.1"/>
    <property type="gene ID" value="AT3G27730"/>
</dbReference>
<dbReference type="Gramene" id="AT3G27730.6">
    <property type="protein sequence ID" value="AT3G27730.6"/>
    <property type="gene ID" value="AT3G27730"/>
</dbReference>
<dbReference type="Gramene" id="AT3G27730.7">
    <property type="protein sequence ID" value="AT3G27730.7"/>
    <property type="gene ID" value="AT3G27730"/>
</dbReference>
<dbReference type="KEGG" id="ath:AT3G27730"/>
<dbReference type="Araport" id="AT3G27730"/>
<dbReference type="TAIR" id="AT3G27730">
    <property type="gene designation" value="RCK"/>
</dbReference>
<dbReference type="eggNOG" id="KOG0952">
    <property type="taxonomic scope" value="Eukaryota"/>
</dbReference>
<dbReference type="HOGENOM" id="CLU_000335_0_2_1"/>
<dbReference type="InParanoid" id="Q5D892"/>
<dbReference type="PhylomeDB" id="Q5D892"/>
<dbReference type="PRO" id="PR:Q5D892"/>
<dbReference type="Proteomes" id="UP000006548">
    <property type="component" value="Chromosome 3"/>
</dbReference>
<dbReference type="ExpressionAtlas" id="Q5D892">
    <property type="expression patterns" value="baseline and differential"/>
</dbReference>
<dbReference type="GO" id="GO:0005634">
    <property type="term" value="C:nucleus"/>
    <property type="evidence" value="ECO:0007669"/>
    <property type="project" value="UniProtKB-SubCell"/>
</dbReference>
<dbReference type="GO" id="GO:0005524">
    <property type="term" value="F:ATP binding"/>
    <property type="evidence" value="ECO:0007669"/>
    <property type="project" value="UniProtKB-KW"/>
</dbReference>
<dbReference type="GO" id="GO:0016887">
    <property type="term" value="F:ATP hydrolysis activity"/>
    <property type="evidence" value="ECO:0007669"/>
    <property type="project" value="RHEA"/>
</dbReference>
<dbReference type="GO" id="GO:0003677">
    <property type="term" value="F:DNA binding"/>
    <property type="evidence" value="ECO:0007669"/>
    <property type="project" value="UniProtKB-KW"/>
</dbReference>
<dbReference type="GO" id="GO:0003678">
    <property type="term" value="F:DNA helicase activity"/>
    <property type="evidence" value="ECO:0000250"/>
    <property type="project" value="TAIR"/>
</dbReference>
<dbReference type="GO" id="GO:0003724">
    <property type="term" value="F:RNA helicase activity"/>
    <property type="evidence" value="ECO:0007669"/>
    <property type="project" value="UniProtKB-EC"/>
</dbReference>
<dbReference type="GO" id="GO:0019843">
    <property type="term" value="F:rRNA binding"/>
    <property type="evidence" value="ECO:0007669"/>
    <property type="project" value="UniProtKB-KW"/>
</dbReference>
<dbReference type="GO" id="GO:0051026">
    <property type="term" value="P:chiasma assembly"/>
    <property type="evidence" value="ECO:0000315"/>
    <property type="project" value="TAIR"/>
</dbReference>
<dbReference type="GO" id="GO:0007131">
    <property type="term" value="P:reciprocal meiotic recombination"/>
    <property type="evidence" value="ECO:0000315"/>
    <property type="project" value="TAIR"/>
</dbReference>
<dbReference type="CDD" id="cd18023">
    <property type="entry name" value="DEXHc_HFM1"/>
    <property type="match status" value="1"/>
</dbReference>
<dbReference type="CDD" id="cd18795">
    <property type="entry name" value="SF2_C_Ski2"/>
    <property type="match status" value="1"/>
</dbReference>
<dbReference type="FunFam" id="3.40.50.300:FF:001076">
    <property type="entry name" value="ATP-dependent DNA helicase MER3"/>
    <property type="match status" value="1"/>
</dbReference>
<dbReference type="FunFam" id="1.10.150.20:FF:000077">
    <property type="entry name" value="DExH-box ATP-dependent RNA helicase DExH17"/>
    <property type="match status" value="1"/>
</dbReference>
<dbReference type="FunFam" id="1.10.3380.10:FF:000008">
    <property type="entry name" value="DExH-box ATP-dependent RNA helicase DExH17"/>
    <property type="match status" value="1"/>
</dbReference>
<dbReference type="FunFam" id="1.10.10.10:FF:000012">
    <property type="entry name" value="U5 small nuclear ribonucleoprotein helicase"/>
    <property type="match status" value="1"/>
</dbReference>
<dbReference type="Gene3D" id="1.10.150.20">
    <property type="entry name" value="5' to 3' exonuclease, C-terminal subdomain"/>
    <property type="match status" value="1"/>
</dbReference>
<dbReference type="Gene3D" id="3.40.50.300">
    <property type="entry name" value="P-loop containing nucleotide triphosphate hydrolases"/>
    <property type="match status" value="2"/>
</dbReference>
<dbReference type="Gene3D" id="1.10.3380.10">
    <property type="entry name" value="Sec63 N-terminal domain-like domain"/>
    <property type="match status" value="1"/>
</dbReference>
<dbReference type="Gene3D" id="1.10.10.10">
    <property type="entry name" value="Winged helix-like DNA-binding domain superfamily/Winged helix DNA-binding domain"/>
    <property type="match status" value="1"/>
</dbReference>
<dbReference type="InterPro" id="IPR011545">
    <property type="entry name" value="DEAD/DEAH_box_helicase_dom"/>
</dbReference>
<dbReference type="InterPro" id="IPR014001">
    <property type="entry name" value="Helicase_ATP-bd"/>
</dbReference>
<dbReference type="InterPro" id="IPR001650">
    <property type="entry name" value="Helicase_C-like"/>
</dbReference>
<dbReference type="InterPro" id="IPR052247">
    <property type="entry name" value="Meiotic_Crossover_Helicase"/>
</dbReference>
<dbReference type="InterPro" id="IPR027417">
    <property type="entry name" value="P-loop_NTPase"/>
</dbReference>
<dbReference type="InterPro" id="IPR004179">
    <property type="entry name" value="Sec63-dom"/>
</dbReference>
<dbReference type="InterPro" id="IPR036388">
    <property type="entry name" value="WH-like_DNA-bd_sf"/>
</dbReference>
<dbReference type="PANTHER" id="PTHR47835:SF3">
    <property type="entry name" value="HELICASE FOR MEIOSIS 1"/>
    <property type="match status" value="1"/>
</dbReference>
<dbReference type="PANTHER" id="PTHR47835">
    <property type="entry name" value="HFM1, ATP DEPENDENT DNA HELICASE HOMOLOG"/>
    <property type="match status" value="1"/>
</dbReference>
<dbReference type="Pfam" id="PF00270">
    <property type="entry name" value="DEAD"/>
    <property type="match status" value="1"/>
</dbReference>
<dbReference type="Pfam" id="PF00271">
    <property type="entry name" value="Helicase_C"/>
    <property type="match status" value="1"/>
</dbReference>
<dbReference type="Pfam" id="PF14520">
    <property type="entry name" value="HHH_5"/>
    <property type="match status" value="1"/>
</dbReference>
<dbReference type="Pfam" id="PF02889">
    <property type="entry name" value="Sec63"/>
    <property type="match status" value="1"/>
</dbReference>
<dbReference type="Pfam" id="PF23445">
    <property type="entry name" value="SNRNP200_wHTH"/>
    <property type="match status" value="1"/>
</dbReference>
<dbReference type="SMART" id="SM00487">
    <property type="entry name" value="DEXDc"/>
    <property type="match status" value="1"/>
</dbReference>
<dbReference type="SMART" id="SM00490">
    <property type="entry name" value="HELICc"/>
    <property type="match status" value="1"/>
</dbReference>
<dbReference type="SMART" id="SM00973">
    <property type="entry name" value="Sec63"/>
    <property type="match status" value="1"/>
</dbReference>
<dbReference type="SUPFAM" id="SSF52540">
    <property type="entry name" value="P-loop containing nucleoside triphosphate hydrolases"/>
    <property type="match status" value="2"/>
</dbReference>
<dbReference type="SUPFAM" id="SSF158702">
    <property type="entry name" value="Sec63 N-terminal domain-like"/>
    <property type="match status" value="1"/>
</dbReference>
<dbReference type="PROSITE" id="PS51192">
    <property type="entry name" value="HELICASE_ATP_BIND_1"/>
    <property type="match status" value="1"/>
</dbReference>
<dbReference type="PROSITE" id="PS51194">
    <property type="entry name" value="HELICASE_CTER"/>
    <property type="match status" value="1"/>
</dbReference>
<evidence type="ECO:0000250" key="1">
    <source>
        <dbReference type="UniProtKB" id="B6DMK2"/>
    </source>
</evidence>
<evidence type="ECO:0000250" key="2">
    <source>
        <dbReference type="UniProtKB" id="P51979"/>
    </source>
</evidence>
<evidence type="ECO:0000255" key="3"/>
<evidence type="ECO:0000255" key="4">
    <source>
        <dbReference type="PROSITE-ProRule" id="PRU00541"/>
    </source>
</evidence>
<evidence type="ECO:0000255" key="5">
    <source>
        <dbReference type="PROSITE-ProRule" id="PRU00542"/>
    </source>
</evidence>
<evidence type="ECO:0000256" key="6">
    <source>
        <dbReference type="SAM" id="MobiDB-lite"/>
    </source>
</evidence>
<evidence type="ECO:0000269" key="7">
    <source>
    </source>
</evidence>
<evidence type="ECO:0000269" key="8">
    <source>
    </source>
</evidence>
<evidence type="ECO:0000303" key="9">
    <source>
    </source>
</evidence>
<evidence type="ECO:0000303" key="10">
    <source>
    </source>
</evidence>
<evidence type="ECO:0000303" key="11">
    <source>
    </source>
</evidence>
<evidence type="ECO:0000305" key="12"/>
<evidence type="ECO:0000312" key="13">
    <source>
        <dbReference type="Araport" id="AT3G27730"/>
    </source>
</evidence>
<evidence type="ECO:0000312" key="14">
    <source>
        <dbReference type="EMBL" id="BAB02697.1"/>
    </source>
</evidence>
<feature type="chain" id="PRO_0000432116" description="ATP-dependent DNA helicase homolog MER3">
    <location>
        <begin position="1"/>
        <end position="1133"/>
    </location>
</feature>
<feature type="domain" description="Helicase ATP-binding" evidence="4">
    <location>
        <begin position="34"/>
        <end position="229"/>
    </location>
</feature>
<feature type="domain" description="Helicase C-terminal" evidence="5">
    <location>
        <begin position="263"/>
        <end position="460"/>
    </location>
</feature>
<feature type="domain" description="SEC63" evidence="3">
    <location>
        <begin position="536"/>
        <end position="847"/>
    </location>
</feature>
<feature type="region of interest" description="Disordered" evidence="6">
    <location>
        <begin position="878"/>
        <end position="919"/>
    </location>
</feature>
<feature type="short sequence motif" description="DEVH box" evidence="12">
    <location>
        <begin position="165"/>
        <end position="168"/>
    </location>
</feature>
<feature type="compositionally biased region" description="Basic and acidic residues" evidence="6">
    <location>
        <begin position="893"/>
        <end position="908"/>
    </location>
</feature>
<feature type="compositionally biased region" description="Acidic residues" evidence="6">
    <location>
        <begin position="909"/>
        <end position="919"/>
    </location>
</feature>
<feature type="binding site" evidence="4">
    <location>
        <begin position="47"/>
        <end position="54"/>
    </location>
    <ligand>
        <name>ATP</name>
        <dbReference type="ChEBI" id="CHEBI:30616"/>
    </ligand>
</feature>
<comment type="function">
    <text evidence="7 8">DNA helicase required for crossover formation, complete synapsis of homologous chromosomes and bivalent formation during meiosis. Is specific to recombination events resulting in interference-sensitive crossovers (class I meiotic crossover).</text>
</comment>
<comment type="catalytic activity">
    <reaction evidence="2">
        <text>Couples ATP hydrolysis with the unwinding of duplex DNA by translocating in the 3'-5' direction.</text>
        <dbReference type="EC" id="5.6.2.4"/>
    </reaction>
</comment>
<comment type="catalytic activity">
    <reaction evidence="2">
        <text>ATP + H2O = ADP + phosphate + H(+)</text>
        <dbReference type="Rhea" id="RHEA:13065"/>
        <dbReference type="ChEBI" id="CHEBI:15377"/>
        <dbReference type="ChEBI" id="CHEBI:15378"/>
        <dbReference type="ChEBI" id="CHEBI:30616"/>
        <dbReference type="ChEBI" id="CHEBI:43474"/>
        <dbReference type="ChEBI" id="CHEBI:456216"/>
        <dbReference type="EC" id="5.6.2.4"/>
    </reaction>
</comment>
<comment type="subcellular location">
    <subcellularLocation>
        <location evidence="1">Nucleus</location>
    </subcellularLocation>
</comment>
<comment type="tissue specificity">
    <text evidence="7 8">Expressed in meiocytes during meiosis.</text>
</comment>
<comment type="disruption phenotype">
    <text evidence="7 8">Low levels of fertility due to a significant decrease of meiotic crossovers.</text>
</comment>
<comment type="similarity">
    <text evidence="12">Belongs to the helicase family. SKI2 subfamily.</text>
</comment>
<comment type="sequence caution" evidence="12">
    <conflict type="erroneous gene model prediction">
        <sequence resource="EMBL-CDS" id="BAB02697"/>
    </conflict>
</comment>
<organism>
    <name type="scientific">Arabidopsis thaliana</name>
    <name type="common">Mouse-ear cress</name>
    <dbReference type="NCBI Taxonomy" id="3702"/>
    <lineage>
        <taxon>Eukaryota</taxon>
        <taxon>Viridiplantae</taxon>
        <taxon>Streptophyta</taxon>
        <taxon>Embryophyta</taxon>
        <taxon>Tracheophyta</taxon>
        <taxon>Spermatophyta</taxon>
        <taxon>Magnoliopsida</taxon>
        <taxon>eudicotyledons</taxon>
        <taxon>Gunneridae</taxon>
        <taxon>Pentapetalae</taxon>
        <taxon>rosids</taxon>
        <taxon>malvids</taxon>
        <taxon>Brassicales</taxon>
        <taxon>Brassicaceae</taxon>
        <taxon>Camelineae</taxon>
        <taxon>Arabidopsis</taxon>
    </lineage>
</organism>
<protein>
    <recommendedName>
        <fullName evidence="9 10">ATP-dependent DNA helicase homolog MER3</fullName>
        <ecNumber evidence="2">5.6.2.4</ecNumber>
    </recommendedName>
    <alternativeName>
        <fullName evidence="11">DExH-box ATP-dependent RNA helicase DExH17</fullName>
    </alternativeName>
    <alternativeName>
        <fullName evidence="12">DNA 3'-5' helicase MER3</fullName>
    </alternativeName>
    <alternativeName>
        <fullName evidence="10">Protein ROCK-N-ROLLERS</fullName>
    </alternativeName>
</protein>
<gene>
    <name evidence="9" type="primary">MER3</name>
    <name evidence="10" type="synonym">RCK</name>
    <name evidence="13" type="ordered locus">At3g27730</name>
    <name evidence="14" type="ORF">MGF10.14</name>
</gene>
<name>MER3_ARATH</name>